<accession>P0DMB5</accession>
<organism>
    <name type="scientific">Vespa affinis</name>
    <name type="common">Lesser banded hornet</name>
    <dbReference type="NCBI Taxonomy" id="882735"/>
    <lineage>
        <taxon>Eukaryota</taxon>
        <taxon>Metazoa</taxon>
        <taxon>Ecdysozoa</taxon>
        <taxon>Arthropoda</taxon>
        <taxon>Hexapoda</taxon>
        <taxon>Insecta</taxon>
        <taxon>Pterygota</taxon>
        <taxon>Neoptera</taxon>
        <taxon>Endopterygota</taxon>
        <taxon>Hymenoptera</taxon>
        <taxon>Apocrita</taxon>
        <taxon>Aculeata</taxon>
        <taxon>Vespoidea</taxon>
        <taxon>Vespidae</taxon>
        <taxon>Vespinae</taxon>
        <taxon>Vespa</taxon>
    </lineage>
</organism>
<sequence>MMNLKYLLFFCLVQALHYCYAYGDPSLSNELDRFNPCPYSDDTVKMIILTRENKKHDFYTLNTIKNHNEFKKSTIKHQVVFITHGFTSTATAENFLAMAEALLDKGNYLVILIDWRVAACTNEMAGVKLAYYSYAASNTRLVGNYIATVTKMLVQQYNVPMANIRLVGHSLGAHTSGFAGKKVQELRLGKYSEIIGLDPAGPSFKSQECSQRICETDANYVQIIHTSNHLGTLVTLGTVDFYMNNGYNQPGCGLPIIGETCSHTRAVKYFTECIRHECCLIGVPQSKNPQPVSKCTRNQCVCVGLNAKTYPKTGSFYVPVESKAPYCNNKGKII</sequence>
<keyword id="KW-0020">Allergen</keyword>
<keyword id="KW-0204">Cytolysis</keyword>
<keyword id="KW-1015">Disulfide bond</keyword>
<keyword id="KW-0354">Hemolysis</keyword>
<keyword id="KW-0378">Hydrolase</keyword>
<keyword id="KW-0442">Lipid degradation</keyword>
<keyword id="KW-0443">Lipid metabolism</keyword>
<keyword id="KW-0964">Secreted</keyword>
<keyword id="KW-0732">Signal</keyword>
<proteinExistence type="evidence at protein level"/>
<dbReference type="EC" id="3.1.1.32" evidence="7"/>
<dbReference type="SMR" id="P0DMB5"/>
<dbReference type="Allergome" id="11764">
    <property type="allergen name" value="Vesp a 1"/>
</dbReference>
<dbReference type="ESTHER" id="vesaf-PA11">
    <property type="family name" value="Insect_Phospholipase"/>
</dbReference>
<dbReference type="GO" id="GO:0005615">
    <property type="term" value="C:extracellular space"/>
    <property type="evidence" value="ECO:0007669"/>
    <property type="project" value="TreeGrafter"/>
</dbReference>
<dbReference type="GO" id="GO:0008970">
    <property type="term" value="F:phospholipase A1 activity"/>
    <property type="evidence" value="ECO:0007669"/>
    <property type="project" value="UniProtKB-EC"/>
</dbReference>
<dbReference type="GO" id="GO:0031640">
    <property type="term" value="P:killing of cells of another organism"/>
    <property type="evidence" value="ECO:0007669"/>
    <property type="project" value="UniProtKB-KW"/>
</dbReference>
<dbReference type="GO" id="GO:0016042">
    <property type="term" value="P:lipid catabolic process"/>
    <property type="evidence" value="ECO:0007669"/>
    <property type="project" value="UniProtKB-KW"/>
</dbReference>
<dbReference type="Gene3D" id="3.40.50.1820">
    <property type="entry name" value="alpha/beta hydrolase"/>
    <property type="match status" value="1"/>
</dbReference>
<dbReference type="InterPro" id="IPR029058">
    <property type="entry name" value="AB_hydrolase_fold"/>
</dbReference>
<dbReference type="InterPro" id="IPR002334">
    <property type="entry name" value="Allerg_PlipaseA1"/>
</dbReference>
<dbReference type="InterPro" id="IPR013818">
    <property type="entry name" value="Lipase"/>
</dbReference>
<dbReference type="InterPro" id="IPR000734">
    <property type="entry name" value="TAG_lipase"/>
</dbReference>
<dbReference type="PANTHER" id="PTHR11610">
    <property type="entry name" value="LIPASE"/>
    <property type="match status" value="1"/>
</dbReference>
<dbReference type="PANTHER" id="PTHR11610:SF178">
    <property type="entry name" value="LIPASE MEMBER H-A-LIKE PROTEIN"/>
    <property type="match status" value="1"/>
</dbReference>
<dbReference type="Pfam" id="PF00151">
    <property type="entry name" value="Lipase"/>
    <property type="match status" value="1"/>
</dbReference>
<dbReference type="PRINTS" id="PR00825">
    <property type="entry name" value="DOLALLERGEN"/>
</dbReference>
<dbReference type="SUPFAM" id="SSF53474">
    <property type="entry name" value="alpha/beta-Hydrolases"/>
    <property type="match status" value="1"/>
</dbReference>
<dbReference type="PROSITE" id="PS00120">
    <property type="entry name" value="LIPASE_SER"/>
    <property type="match status" value="1"/>
</dbReference>
<comment type="function">
    <text evidence="4 7">Catalyzes the hydrolysis of phosphatidylcholine with phospholipase A1 activity (6.3 U/ml) (PubMed:23159790). May act as an allergen and induce hemolytic activity (By similarity).</text>
</comment>
<comment type="catalytic activity">
    <reaction evidence="7">
        <text>a 1,2-diacyl-sn-glycero-3-phosphocholine + H2O = a 2-acyl-sn-glycero-3-phosphocholine + a fatty acid + H(+)</text>
        <dbReference type="Rhea" id="RHEA:18689"/>
        <dbReference type="ChEBI" id="CHEBI:15377"/>
        <dbReference type="ChEBI" id="CHEBI:15378"/>
        <dbReference type="ChEBI" id="CHEBI:28868"/>
        <dbReference type="ChEBI" id="CHEBI:57643"/>
        <dbReference type="ChEBI" id="CHEBI:57875"/>
        <dbReference type="EC" id="3.1.1.32"/>
    </reaction>
</comment>
<comment type="biophysicochemical properties">
    <temperatureDependence>
        <text evidence="7">Loses its activity after heat treatment.</text>
    </temperatureDependence>
</comment>
<comment type="subcellular location">
    <subcellularLocation>
        <location evidence="7">Secreted</location>
    </subcellularLocation>
</comment>
<comment type="tissue specificity">
    <text evidence="10">Expressed by the venom gland.</text>
</comment>
<comment type="PTM">
    <text evidence="7">Not glycosylated.</text>
</comment>
<comment type="mass spectrometry"/>
<comment type="allergen">
    <text evidence="3">Causes an allergic reaction in human. Binds to IgE.</text>
</comment>
<comment type="toxic dose">
    <text evidence="7">120 mg/kg body weight concentration is able to paralyze 67% of the crickets (PD(67) is 120 mg/kg).</text>
</comment>
<comment type="similarity">
    <text evidence="9">Belongs to the AB hydrolase superfamily. Lipase family.</text>
</comment>
<reference key="1">
    <citation type="journal article" date="2013" name="Toxicon">
        <title>Purification and structural characterisation of phospholipase A1 (Vespapase, Ves a 1) from Thai banded tiger wasp (Vespa affinis) venom.</title>
        <authorList>
            <person name="Sukprasert S."/>
            <person name="Rungsa P."/>
            <person name="Uawonggul N."/>
            <person name="Incamnoi P."/>
            <person name="Thammasirirak S."/>
            <person name="Daduang J."/>
            <person name="Daduang S."/>
        </authorList>
    </citation>
    <scope>NUCLEOTIDE SEQUENCE [MRNA]</scope>
    <scope>CATALYTIC ACTIVITY</scope>
    <scope>FUNCTION</scope>
    <scope>SUBCELLULAR LOCATION</scope>
    <scope>BIOASSAY</scope>
    <scope>BIOPHYSICOCHEMICAL PROPERTIES</scope>
    <scope>TOXIC DOSE</scope>
    <scope>3D-STRUCTURE MODELING</scope>
    <scope>MASS SPECTROMETRY</scope>
    <source>
        <tissue>Venom</tissue>
        <tissue>Venom gland</tissue>
    </source>
</reference>
<protein>
    <recommendedName>
        <fullName evidence="9">Phospholipase A1 2</fullName>
        <shortName evidence="9">PLA1</shortName>
        <ecNumber evidence="7">3.1.1.32</ecNumber>
    </recommendedName>
    <alternativeName>
        <fullName evidence="8">Allergen Ves a 1.02</fullName>
    </alternativeName>
    <alternativeName>
        <fullName evidence="8">Vespapase</fullName>
    </alternativeName>
    <allergenName evidence="9">Vesp a 1</allergenName>
</protein>
<evidence type="ECO:0000250" key="1"/>
<evidence type="ECO:0000250" key="2">
    <source>
        <dbReference type="UniProtKB" id="A0A0M3KKW3"/>
    </source>
</evidence>
<evidence type="ECO:0000250" key="3">
    <source>
        <dbReference type="UniProtKB" id="A2VBC4"/>
    </source>
</evidence>
<evidence type="ECO:0000250" key="4">
    <source>
        <dbReference type="UniProtKB" id="P0DMB7"/>
    </source>
</evidence>
<evidence type="ECO:0000255" key="5"/>
<evidence type="ECO:0000255" key="6">
    <source>
        <dbReference type="PROSITE-ProRule" id="PRU10037"/>
    </source>
</evidence>
<evidence type="ECO:0000269" key="7">
    <source>
    </source>
</evidence>
<evidence type="ECO:0000303" key="8">
    <source>
    </source>
</evidence>
<evidence type="ECO:0000305" key="9"/>
<evidence type="ECO:0000305" key="10">
    <source>
    </source>
</evidence>
<feature type="signal peptide" evidence="5">
    <location>
        <begin position="1"/>
        <end position="23"/>
    </location>
</feature>
<feature type="propeptide" id="PRO_0000425194" evidence="1">
    <location>
        <begin position="24"/>
        <end position="33"/>
    </location>
</feature>
<feature type="chain" id="PRO_0000425195" description="Phospholipase A1 2">
    <location>
        <begin position="34"/>
        <end position="334"/>
    </location>
</feature>
<feature type="active site" description="Nucleophile" evidence="2">
    <location>
        <position position="170"/>
    </location>
</feature>
<feature type="active site" description="Charge relay system" evidence="6">
    <location>
        <position position="198"/>
    </location>
</feature>
<feature type="active site" description="Charge relay system" evidence="6">
    <location>
        <position position="263"/>
    </location>
</feature>
<feature type="disulfide bond" evidence="2">
    <location>
        <begin position="37"/>
        <end position="120"/>
    </location>
</feature>
<feature type="disulfide bond" evidence="2">
    <location>
        <begin position="209"/>
        <end position="214"/>
    </location>
</feature>
<feature type="disulfide bond" evidence="2">
    <location>
        <begin position="252"/>
        <end position="261"/>
    </location>
</feature>
<feature type="disulfide bond" evidence="2">
    <location>
        <begin position="278"/>
        <end position="302"/>
    </location>
</feature>
<feature type="disulfide bond" evidence="2">
    <location>
        <begin position="279"/>
        <end position="327"/>
    </location>
</feature>
<feature type="disulfide bond" evidence="2">
    <location>
        <begin position="295"/>
        <end position="300"/>
    </location>
</feature>
<name>PA12_VESAF</name>